<gene>
    <name evidence="1" type="primary">prsA</name>
    <name type="ordered locus">LVIS_1484</name>
</gene>
<accession>Q03QE1</accession>
<evidence type="ECO:0000255" key="1">
    <source>
        <dbReference type="HAMAP-Rule" id="MF_01145"/>
    </source>
</evidence>
<keyword id="KW-1003">Cell membrane</keyword>
<keyword id="KW-0413">Isomerase</keyword>
<keyword id="KW-0449">Lipoprotein</keyword>
<keyword id="KW-0472">Membrane</keyword>
<keyword id="KW-0564">Palmitate</keyword>
<keyword id="KW-1185">Reference proteome</keyword>
<keyword id="KW-0697">Rotamase</keyword>
<keyword id="KW-0732">Signal</keyword>
<name>PRSA_LEVBA</name>
<dbReference type="EC" id="5.2.1.8" evidence="1"/>
<dbReference type="EMBL" id="CP000416">
    <property type="protein sequence ID" value="ABJ64581.1"/>
    <property type="molecule type" value="Genomic_DNA"/>
</dbReference>
<dbReference type="RefSeq" id="WP_011668209.1">
    <property type="nucleotide sequence ID" value="NC_008497.1"/>
</dbReference>
<dbReference type="SMR" id="Q03QE1"/>
<dbReference type="STRING" id="387344.LVIS_1484"/>
<dbReference type="DNASU" id="4413774"/>
<dbReference type="KEGG" id="lbr:LVIS_1484"/>
<dbReference type="PATRIC" id="fig|387344.15.peg.1419"/>
<dbReference type="eggNOG" id="COG0760">
    <property type="taxonomic scope" value="Bacteria"/>
</dbReference>
<dbReference type="HOGENOM" id="CLU_034646_6_1_9"/>
<dbReference type="Proteomes" id="UP000001652">
    <property type="component" value="Chromosome"/>
</dbReference>
<dbReference type="GO" id="GO:0005886">
    <property type="term" value="C:plasma membrane"/>
    <property type="evidence" value="ECO:0007669"/>
    <property type="project" value="UniProtKB-SubCell"/>
</dbReference>
<dbReference type="GO" id="GO:0003755">
    <property type="term" value="F:peptidyl-prolyl cis-trans isomerase activity"/>
    <property type="evidence" value="ECO:0007669"/>
    <property type="project" value="UniProtKB-UniRule"/>
</dbReference>
<dbReference type="GO" id="GO:0006457">
    <property type="term" value="P:protein folding"/>
    <property type="evidence" value="ECO:0007669"/>
    <property type="project" value="UniProtKB-UniRule"/>
</dbReference>
<dbReference type="Gene3D" id="3.10.50.40">
    <property type="match status" value="1"/>
</dbReference>
<dbReference type="HAMAP" id="MF_01145">
    <property type="entry name" value="Foldase_PrsA"/>
    <property type="match status" value="1"/>
</dbReference>
<dbReference type="InterPro" id="IPR023059">
    <property type="entry name" value="Foldase_PrsA"/>
</dbReference>
<dbReference type="InterPro" id="IPR046357">
    <property type="entry name" value="PPIase_dom_sf"/>
</dbReference>
<dbReference type="InterPro" id="IPR000297">
    <property type="entry name" value="PPIase_PpiC"/>
</dbReference>
<dbReference type="InterPro" id="IPR050245">
    <property type="entry name" value="PrsA_foldase"/>
</dbReference>
<dbReference type="InterPro" id="IPR027304">
    <property type="entry name" value="Trigger_fact/SurA_dom_sf"/>
</dbReference>
<dbReference type="NCBIfam" id="NF003356">
    <property type="entry name" value="PRK04405.1"/>
    <property type="match status" value="1"/>
</dbReference>
<dbReference type="PANTHER" id="PTHR47245:SF1">
    <property type="entry name" value="FOLDASE PROTEIN PRSA"/>
    <property type="match status" value="1"/>
</dbReference>
<dbReference type="PANTHER" id="PTHR47245">
    <property type="entry name" value="PEPTIDYLPROLYL ISOMERASE"/>
    <property type="match status" value="1"/>
</dbReference>
<dbReference type="Pfam" id="PF00639">
    <property type="entry name" value="Rotamase"/>
    <property type="match status" value="1"/>
</dbReference>
<dbReference type="SUPFAM" id="SSF54534">
    <property type="entry name" value="FKBP-like"/>
    <property type="match status" value="1"/>
</dbReference>
<dbReference type="SUPFAM" id="SSF109998">
    <property type="entry name" value="Triger factor/SurA peptide-binding domain-like"/>
    <property type="match status" value="1"/>
</dbReference>
<dbReference type="PROSITE" id="PS50198">
    <property type="entry name" value="PPIC_PPIASE_2"/>
    <property type="match status" value="1"/>
</dbReference>
<dbReference type="PROSITE" id="PS51257">
    <property type="entry name" value="PROKAR_LIPOPROTEIN"/>
    <property type="match status" value="1"/>
</dbReference>
<reference key="1">
    <citation type="journal article" date="2006" name="Proc. Natl. Acad. Sci. U.S.A.">
        <title>Comparative genomics of the lactic acid bacteria.</title>
        <authorList>
            <person name="Makarova K.S."/>
            <person name="Slesarev A."/>
            <person name="Wolf Y.I."/>
            <person name="Sorokin A."/>
            <person name="Mirkin B."/>
            <person name="Koonin E.V."/>
            <person name="Pavlov A."/>
            <person name="Pavlova N."/>
            <person name="Karamychev V."/>
            <person name="Polouchine N."/>
            <person name="Shakhova V."/>
            <person name="Grigoriev I."/>
            <person name="Lou Y."/>
            <person name="Rohksar D."/>
            <person name="Lucas S."/>
            <person name="Huang K."/>
            <person name="Goodstein D.M."/>
            <person name="Hawkins T."/>
            <person name="Plengvidhya V."/>
            <person name="Welker D."/>
            <person name="Hughes J."/>
            <person name="Goh Y."/>
            <person name="Benson A."/>
            <person name="Baldwin K."/>
            <person name="Lee J.-H."/>
            <person name="Diaz-Muniz I."/>
            <person name="Dosti B."/>
            <person name="Smeianov V."/>
            <person name="Wechter W."/>
            <person name="Barabote R."/>
            <person name="Lorca G."/>
            <person name="Altermann E."/>
            <person name="Barrangou R."/>
            <person name="Ganesan B."/>
            <person name="Xie Y."/>
            <person name="Rawsthorne H."/>
            <person name="Tamir D."/>
            <person name="Parker C."/>
            <person name="Breidt F."/>
            <person name="Broadbent J.R."/>
            <person name="Hutkins R."/>
            <person name="O'Sullivan D."/>
            <person name="Steele J."/>
            <person name="Unlu G."/>
            <person name="Saier M.H. Jr."/>
            <person name="Klaenhammer T."/>
            <person name="Richardson P."/>
            <person name="Kozyavkin S."/>
            <person name="Weimer B.C."/>
            <person name="Mills D.A."/>
        </authorList>
    </citation>
    <scope>NUCLEOTIDE SEQUENCE [LARGE SCALE GENOMIC DNA]</scope>
    <source>
        <strain>ATCC 367 / BCRC 12310 / CIP 105137 / JCM 1170 / LMG 11437 / NCIMB 947 / NCTC 947</strain>
    </source>
</reference>
<proteinExistence type="inferred from homology"/>
<comment type="function">
    <text evidence="1">Plays a major role in protein secretion by helping the post-translocational extracellular folding of several secreted proteins.</text>
</comment>
<comment type="catalytic activity">
    <reaction evidence="1">
        <text>[protein]-peptidylproline (omega=180) = [protein]-peptidylproline (omega=0)</text>
        <dbReference type="Rhea" id="RHEA:16237"/>
        <dbReference type="Rhea" id="RHEA-COMP:10747"/>
        <dbReference type="Rhea" id="RHEA-COMP:10748"/>
        <dbReference type="ChEBI" id="CHEBI:83833"/>
        <dbReference type="ChEBI" id="CHEBI:83834"/>
        <dbReference type="EC" id="5.2.1.8"/>
    </reaction>
</comment>
<comment type="subcellular location">
    <subcellularLocation>
        <location evidence="1">Cell membrane</location>
        <topology evidence="1">Lipid-anchor</topology>
    </subcellularLocation>
</comment>
<comment type="similarity">
    <text evidence="1">Belongs to the PrsA family.</text>
</comment>
<feature type="signal peptide" evidence="1">
    <location>
        <begin position="1"/>
        <end position="19"/>
    </location>
</feature>
<feature type="chain" id="PRO_1000085052" description="Foldase protein PrsA">
    <location>
        <begin position="20"/>
        <end position="305"/>
    </location>
</feature>
<feature type="domain" description="PpiC" evidence="1">
    <location>
        <begin position="136"/>
        <end position="235"/>
    </location>
</feature>
<feature type="lipid moiety-binding region" description="N-palmitoyl cysteine" evidence="1">
    <location>
        <position position="20"/>
    </location>
</feature>
<feature type="lipid moiety-binding region" description="S-diacylglycerol cysteine" evidence="1">
    <location>
        <position position="20"/>
    </location>
</feature>
<protein>
    <recommendedName>
        <fullName evidence="1">Foldase protein PrsA</fullName>
        <ecNumber evidence="1">5.2.1.8</ecNumber>
    </recommendedName>
</protein>
<sequence>MKKWFIALAGLLLTVTLAGCGSQTVATTNGGKITESAYYSSLKGTSSGKQVLQQMILNKVLEKQYGDKVSKSAVTKQFDKYKSQYGSSFSSVLSQSGMTQSSLKTEIRSNLLLKEAVKDNVTVTDAQLKKQFKSYEPEVSVAHILVSKKSTAQTIIKDLKSTKSSDMTSEFTKLAKKYSTDTATKNKGGKLSSFDSTDTSLDSTFKKAAFKLKTGEYTATPVKTQYGYHVILMLKNPGKGTIKEHKAELTKQIIDNDMNDSTVLHNVVAKVLKKGNVSIKDNDLKNILSDYLSSSSSSSASSSSK</sequence>
<organism>
    <name type="scientific">Levilactobacillus brevis (strain ATCC 367 / BCRC 12310 / CIP 105137 / JCM 1170 / LMG 11437 / NCIMB 947 / NCTC 947)</name>
    <name type="common">Lactobacillus brevis</name>
    <dbReference type="NCBI Taxonomy" id="387344"/>
    <lineage>
        <taxon>Bacteria</taxon>
        <taxon>Bacillati</taxon>
        <taxon>Bacillota</taxon>
        <taxon>Bacilli</taxon>
        <taxon>Lactobacillales</taxon>
        <taxon>Lactobacillaceae</taxon>
        <taxon>Levilactobacillus</taxon>
    </lineage>
</organism>